<protein>
    <recommendedName>
        <fullName>Mitochondrial import inner membrane translocase subunit Tim9</fullName>
    </recommendedName>
</protein>
<keyword id="KW-0007">Acetylation</keyword>
<keyword id="KW-0143">Chaperone</keyword>
<keyword id="KW-0903">Direct protein sequencing</keyword>
<keyword id="KW-1015">Disulfide bond</keyword>
<keyword id="KW-0472">Membrane</keyword>
<keyword id="KW-0479">Metal-binding</keyword>
<keyword id="KW-0496">Mitochondrion</keyword>
<keyword id="KW-0999">Mitochondrion inner membrane</keyword>
<keyword id="KW-0653">Protein transport</keyword>
<keyword id="KW-1185">Reference proteome</keyword>
<keyword id="KW-0811">Translocation</keyword>
<keyword id="KW-0813">Transport</keyword>
<keyword id="KW-0862">Zinc</keyword>
<feature type="initiator methionine" description="Removed" evidence="2">
    <location>
        <position position="1"/>
    </location>
</feature>
<feature type="chain" id="PRO_0000193597" description="Mitochondrial import inner membrane translocase subunit Tim9">
    <location>
        <begin position="2"/>
        <end position="89"/>
    </location>
</feature>
<feature type="short sequence motif" description="Twin CX3C motif">
    <location>
        <begin position="28"/>
        <end position="52"/>
    </location>
</feature>
<feature type="modified residue" description="N-acetylalanine" evidence="2">
    <location>
        <position position="2"/>
    </location>
</feature>
<feature type="disulfide bond" evidence="1">
    <location>
        <begin position="28"/>
        <end position="52"/>
    </location>
</feature>
<feature type="disulfide bond" evidence="1">
    <location>
        <begin position="32"/>
        <end position="48"/>
    </location>
</feature>
<feature type="sequence conflict" description="In Ref. 2; AAD40008." evidence="3" ref="2">
    <original>FQ</original>
    <variation>E</variation>
    <location>
        <begin position="67"/>
        <end position="68"/>
    </location>
</feature>
<feature type="sequence conflict" description="In Ref. 2; AAD40008." evidence="3" ref="2">
    <original>A</original>
    <variation>V</variation>
    <location>
        <position position="79"/>
    </location>
</feature>
<reference key="1">
    <citation type="journal article" date="2004" name="Nature">
        <title>Genome sequence of the Brown Norway rat yields insights into mammalian evolution.</title>
        <authorList>
            <person name="Gibbs R.A."/>
            <person name="Weinstock G.M."/>
            <person name="Metzker M.L."/>
            <person name="Muzny D.M."/>
            <person name="Sodergren E.J."/>
            <person name="Scherer S."/>
            <person name="Scott G."/>
            <person name="Steffen D."/>
            <person name="Worley K.C."/>
            <person name="Burch P.E."/>
            <person name="Okwuonu G."/>
            <person name="Hines S."/>
            <person name="Lewis L."/>
            <person name="Deramo C."/>
            <person name="Delgado O."/>
            <person name="Dugan-Rocha S."/>
            <person name="Miner G."/>
            <person name="Morgan M."/>
            <person name="Hawes A."/>
            <person name="Gill R."/>
            <person name="Holt R.A."/>
            <person name="Adams M.D."/>
            <person name="Amanatides P.G."/>
            <person name="Baden-Tillson H."/>
            <person name="Barnstead M."/>
            <person name="Chin S."/>
            <person name="Evans C.A."/>
            <person name="Ferriera S."/>
            <person name="Fosler C."/>
            <person name="Glodek A."/>
            <person name="Gu Z."/>
            <person name="Jennings D."/>
            <person name="Kraft C.L."/>
            <person name="Nguyen T."/>
            <person name="Pfannkoch C.M."/>
            <person name="Sitter C."/>
            <person name="Sutton G.G."/>
            <person name="Venter J.C."/>
            <person name="Woodage T."/>
            <person name="Smith D."/>
            <person name="Lee H.-M."/>
            <person name="Gustafson E."/>
            <person name="Cahill P."/>
            <person name="Kana A."/>
            <person name="Doucette-Stamm L."/>
            <person name="Weinstock K."/>
            <person name="Fechtel K."/>
            <person name="Weiss R.B."/>
            <person name="Dunn D.M."/>
            <person name="Green E.D."/>
            <person name="Blakesley R.W."/>
            <person name="Bouffard G.G."/>
            <person name="De Jong P.J."/>
            <person name="Osoegawa K."/>
            <person name="Zhu B."/>
            <person name="Marra M."/>
            <person name="Schein J."/>
            <person name="Bosdet I."/>
            <person name="Fjell C."/>
            <person name="Jones S."/>
            <person name="Krzywinski M."/>
            <person name="Mathewson C."/>
            <person name="Siddiqui A."/>
            <person name="Wye N."/>
            <person name="McPherson J."/>
            <person name="Zhao S."/>
            <person name="Fraser C.M."/>
            <person name="Shetty J."/>
            <person name="Shatsman S."/>
            <person name="Geer K."/>
            <person name="Chen Y."/>
            <person name="Abramzon S."/>
            <person name="Nierman W.C."/>
            <person name="Havlak P.H."/>
            <person name="Chen R."/>
            <person name="Durbin K.J."/>
            <person name="Egan A."/>
            <person name="Ren Y."/>
            <person name="Song X.-Z."/>
            <person name="Li B."/>
            <person name="Liu Y."/>
            <person name="Qin X."/>
            <person name="Cawley S."/>
            <person name="Cooney A.J."/>
            <person name="D'Souza L.M."/>
            <person name="Martin K."/>
            <person name="Wu J.Q."/>
            <person name="Gonzalez-Garay M.L."/>
            <person name="Jackson A.R."/>
            <person name="Kalafus K.J."/>
            <person name="McLeod M.P."/>
            <person name="Milosavljevic A."/>
            <person name="Virk D."/>
            <person name="Volkov A."/>
            <person name="Wheeler D.A."/>
            <person name="Zhang Z."/>
            <person name="Bailey J.A."/>
            <person name="Eichler E.E."/>
            <person name="Tuzun E."/>
            <person name="Birney E."/>
            <person name="Mongin E."/>
            <person name="Ureta-Vidal A."/>
            <person name="Woodwark C."/>
            <person name="Zdobnov E."/>
            <person name="Bork P."/>
            <person name="Suyama M."/>
            <person name="Torrents D."/>
            <person name="Alexandersson M."/>
            <person name="Trask B.J."/>
            <person name="Young J.M."/>
            <person name="Huang H."/>
            <person name="Wang H."/>
            <person name="Xing H."/>
            <person name="Daniels S."/>
            <person name="Gietzen D."/>
            <person name="Schmidt J."/>
            <person name="Stevens K."/>
            <person name="Vitt U."/>
            <person name="Wingrove J."/>
            <person name="Camara F."/>
            <person name="Mar Alba M."/>
            <person name="Abril J.F."/>
            <person name="Guigo R."/>
            <person name="Smit A."/>
            <person name="Dubchak I."/>
            <person name="Rubin E.M."/>
            <person name="Couronne O."/>
            <person name="Poliakov A."/>
            <person name="Huebner N."/>
            <person name="Ganten D."/>
            <person name="Goesele C."/>
            <person name="Hummel O."/>
            <person name="Kreitler T."/>
            <person name="Lee Y.-A."/>
            <person name="Monti J."/>
            <person name="Schulz H."/>
            <person name="Zimdahl H."/>
            <person name="Himmelbauer H."/>
            <person name="Lehrach H."/>
            <person name="Jacob H.J."/>
            <person name="Bromberg S."/>
            <person name="Gullings-Handley J."/>
            <person name="Jensen-Seaman M.I."/>
            <person name="Kwitek A.E."/>
            <person name="Lazar J."/>
            <person name="Pasko D."/>
            <person name="Tonellato P.J."/>
            <person name="Twigger S."/>
            <person name="Ponting C.P."/>
            <person name="Duarte J.M."/>
            <person name="Rice S."/>
            <person name="Goodstadt L."/>
            <person name="Beatson S.A."/>
            <person name="Emes R.D."/>
            <person name="Winter E.E."/>
            <person name="Webber C."/>
            <person name="Brandt P."/>
            <person name="Nyakatura G."/>
            <person name="Adetobi M."/>
            <person name="Chiaromonte F."/>
            <person name="Elnitski L."/>
            <person name="Eswara P."/>
            <person name="Hardison R.C."/>
            <person name="Hou M."/>
            <person name="Kolbe D."/>
            <person name="Makova K."/>
            <person name="Miller W."/>
            <person name="Nekrutenko A."/>
            <person name="Riemer C."/>
            <person name="Schwartz S."/>
            <person name="Taylor J."/>
            <person name="Yang S."/>
            <person name="Zhang Y."/>
            <person name="Lindpaintner K."/>
            <person name="Andrews T.D."/>
            <person name="Caccamo M."/>
            <person name="Clamp M."/>
            <person name="Clarke L."/>
            <person name="Curwen V."/>
            <person name="Durbin R.M."/>
            <person name="Eyras E."/>
            <person name="Searle S.M."/>
            <person name="Cooper G.M."/>
            <person name="Batzoglou S."/>
            <person name="Brudno M."/>
            <person name="Sidow A."/>
            <person name="Stone E.A."/>
            <person name="Payseur B.A."/>
            <person name="Bourque G."/>
            <person name="Lopez-Otin C."/>
            <person name="Puente X.S."/>
            <person name="Chakrabarti K."/>
            <person name="Chatterji S."/>
            <person name="Dewey C."/>
            <person name="Pachter L."/>
            <person name="Bray N."/>
            <person name="Yap V.B."/>
            <person name="Caspi A."/>
            <person name="Tesler G."/>
            <person name="Pevzner P.A."/>
            <person name="Haussler D."/>
            <person name="Roskin K.M."/>
            <person name="Baertsch R."/>
            <person name="Clawson H."/>
            <person name="Furey T.S."/>
            <person name="Hinrichs A.S."/>
            <person name="Karolchik D."/>
            <person name="Kent W.J."/>
            <person name="Rosenbloom K.R."/>
            <person name="Trumbower H."/>
            <person name="Weirauch M."/>
            <person name="Cooper D.N."/>
            <person name="Stenson P.D."/>
            <person name="Ma B."/>
            <person name="Brent M."/>
            <person name="Arumugam M."/>
            <person name="Shteynberg D."/>
            <person name="Copley R.R."/>
            <person name="Taylor M.S."/>
            <person name="Riethman H."/>
            <person name="Mudunuri U."/>
            <person name="Peterson J."/>
            <person name="Guyer M."/>
            <person name="Felsenfeld A."/>
            <person name="Old S."/>
            <person name="Mockrin S."/>
            <person name="Collins F.S."/>
        </authorList>
    </citation>
    <scope>NUCLEOTIDE SEQUENCE [LARGE SCALE GENOMIC DNA]</scope>
    <source>
        <strain>Brown Norway</strain>
    </source>
</reference>
<reference key="2">
    <citation type="submission" date="1999-05" db="EMBL/GenBank/DDBJ databases">
        <title>Cloning and mapping of the Tim10/DDP gene family encoding small zinc finger proteins involved in mitochondrial carrier import.</title>
        <authorList>
            <person name="Bauer M.F."/>
            <person name="Brunner M."/>
            <person name="Hofmann S."/>
        </authorList>
    </citation>
    <scope>NUCLEOTIDE SEQUENCE [MRNA] OF 46-89</scope>
</reference>
<reference key="3">
    <citation type="submission" date="2007-04" db="UniProtKB">
        <authorList>
            <person name="Lubec G."/>
            <person name="Chen W.-Q."/>
            <person name="Diao W."/>
        </authorList>
    </citation>
    <scope>PROTEIN SEQUENCE OF 24-34 AND 67-81</scope>
    <scope>IDENTIFICATION BY MASS SPECTROMETRY</scope>
    <source>
        <strain>Sprague-Dawley</strain>
        <tissue>Hippocampus</tissue>
    </source>
</reference>
<name>TIM9_RAT</name>
<dbReference type="EMBL" id="AABR03049301">
    <property type="status" value="NOT_ANNOTATED_CDS"/>
    <property type="molecule type" value="Genomic_DNA"/>
</dbReference>
<dbReference type="EMBL" id="AF150102">
    <property type="protein sequence ID" value="AAD40008.1"/>
    <property type="status" value="ALT_TERM"/>
    <property type="molecule type" value="mRNA"/>
</dbReference>
<dbReference type="RefSeq" id="NP_001263358.1">
    <property type="nucleotide sequence ID" value="NM_001276429.1"/>
</dbReference>
<dbReference type="RefSeq" id="NP_001263359.1">
    <property type="nucleotide sequence ID" value="NM_001276430.1"/>
</dbReference>
<dbReference type="RefSeq" id="NP_598288.1">
    <property type="nucleotide sequence ID" value="NM_133604.1"/>
</dbReference>
<dbReference type="RefSeq" id="XP_038967671.1">
    <property type="nucleotide sequence ID" value="XM_039111743.1"/>
</dbReference>
<dbReference type="RefSeq" id="XP_063117586.1">
    <property type="nucleotide sequence ID" value="XM_063261516.1"/>
</dbReference>
<dbReference type="RefSeq" id="XP_063117587.1">
    <property type="nucleotide sequence ID" value="XM_063261517.1"/>
</dbReference>
<dbReference type="SMR" id="Q9WV97"/>
<dbReference type="FunCoup" id="Q9WV97">
    <property type="interactions" value="3003"/>
</dbReference>
<dbReference type="STRING" id="10116.ENSRNOP00000010871"/>
<dbReference type="iPTMnet" id="Q9WV97"/>
<dbReference type="PhosphoSitePlus" id="Q9WV97"/>
<dbReference type="PaxDb" id="10116-ENSRNOP00000010871"/>
<dbReference type="Ensembl" id="ENSRNOT00000010871.6">
    <property type="protein sequence ID" value="ENSRNOP00000010871.3"/>
    <property type="gene ID" value="ENSRNOG00000008222.6"/>
</dbReference>
<dbReference type="GeneID" id="171139"/>
<dbReference type="KEGG" id="rno:171139"/>
<dbReference type="UCSC" id="RGD:621656">
    <property type="organism name" value="rat"/>
</dbReference>
<dbReference type="AGR" id="RGD:621656"/>
<dbReference type="CTD" id="26520"/>
<dbReference type="RGD" id="621656">
    <property type="gene designation" value="Timm9"/>
</dbReference>
<dbReference type="eggNOG" id="KOG3479">
    <property type="taxonomic scope" value="Eukaryota"/>
</dbReference>
<dbReference type="GeneTree" id="ENSGT00940000160102"/>
<dbReference type="HOGENOM" id="CLU_141397_3_3_1"/>
<dbReference type="InParanoid" id="Q9WV97"/>
<dbReference type="OMA" id="QDFLRMY"/>
<dbReference type="OrthoDB" id="1551503at2759"/>
<dbReference type="PhylomeDB" id="Q9WV97"/>
<dbReference type="TreeFam" id="TF106192"/>
<dbReference type="PRO" id="PR:Q9WV97"/>
<dbReference type="Proteomes" id="UP000002494">
    <property type="component" value="Chromosome 6"/>
</dbReference>
<dbReference type="Bgee" id="ENSRNOG00000008222">
    <property type="expression patterns" value="Expressed in pancreas and 20 other cell types or tissues"/>
</dbReference>
<dbReference type="GO" id="GO:0005743">
    <property type="term" value="C:mitochondrial inner membrane"/>
    <property type="evidence" value="ECO:0000266"/>
    <property type="project" value="RGD"/>
</dbReference>
<dbReference type="GO" id="GO:0005758">
    <property type="term" value="C:mitochondrial intermembrane space"/>
    <property type="evidence" value="ECO:0000266"/>
    <property type="project" value="RGD"/>
</dbReference>
<dbReference type="GO" id="GO:0042719">
    <property type="term" value="C:mitochondrial intermembrane space protein transporter complex"/>
    <property type="evidence" value="ECO:0000266"/>
    <property type="project" value="RGD"/>
</dbReference>
<dbReference type="GO" id="GO:0042721">
    <property type="term" value="C:TIM22 mitochondrial import inner membrane insertion complex"/>
    <property type="evidence" value="ECO:0000266"/>
    <property type="project" value="RGD"/>
</dbReference>
<dbReference type="GO" id="GO:0032977">
    <property type="term" value="F:membrane insertase activity"/>
    <property type="evidence" value="ECO:0000266"/>
    <property type="project" value="RGD"/>
</dbReference>
<dbReference type="GO" id="GO:0046872">
    <property type="term" value="F:metal ion binding"/>
    <property type="evidence" value="ECO:0007669"/>
    <property type="project" value="UniProtKB-KW"/>
</dbReference>
<dbReference type="GO" id="GO:0042803">
    <property type="term" value="F:protein homodimerization activity"/>
    <property type="evidence" value="ECO:0000266"/>
    <property type="project" value="RGD"/>
</dbReference>
<dbReference type="GO" id="GO:0051087">
    <property type="term" value="F:protein-folding chaperone binding"/>
    <property type="evidence" value="ECO:0000266"/>
    <property type="project" value="RGD"/>
</dbReference>
<dbReference type="GO" id="GO:0045039">
    <property type="term" value="P:protein insertion into mitochondrial inner membrane"/>
    <property type="evidence" value="ECO:0000266"/>
    <property type="project" value="RGD"/>
</dbReference>
<dbReference type="FunFam" id="1.10.287.810:FF:000004">
    <property type="entry name" value="Mitochondrial import inner membrane translocase subunit Tim9"/>
    <property type="match status" value="1"/>
</dbReference>
<dbReference type="Gene3D" id="1.10.287.810">
    <property type="entry name" value="Mitochondrial import inner membrane translocase subunit tim13 like domains"/>
    <property type="match status" value="1"/>
</dbReference>
<dbReference type="InterPro" id="IPR050673">
    <property type="entry name" value="Mito_inner_translocase_sub"/>
</dbReference>
<dbReference type="InterPro" id="IPR004217">
    <property type="entry name" value="Tim10-like"/>
</dbReference>
<dbReference type="InterPro" id="IPR035427">
    <property type="entry name" value="Tim10-like_dom_sf"/>
</dbReference>
<dbReference type="PANTHER" id="PTHR13172">
    <property type="entry name" value="MITOCHONDRIAL IMPORT INNER MEMBRANE TRANSLOCASE SUBUNIT TIM9B"/>
    <property type="match status" value="1"/>
</dbReference>
<dbReference type="Pfam" id="PF02953">
    <property type="entry name" value="zf-Tim10_DDP"/>
    <property type="match status" value="1"/>
</dbReference>
<dbReference type="SUPFAM" id="SSF144122">
    <property type="entry name" value="Tim10-like"/>
    <property type="match status" value="1"/>
</dbReference>
<gene>
    <name type="primary">Timm9</name>
    <name type="synonym">Tim9</name>
    <name type="synonym">Tim9a</name>
    <name type="synonym">Timm9a</name>
</gene>
<accession>Q9WV97</accession>
<proteinExistence type="evidence at protein level"/>
<sequence>MAAQIPESDQIKQFKEFLGTYNKLTETCFLDCVKDFTTREVKPEEVTCSEHCLQKYLKMTQRISMRFQEYHIQQNEALAAKAGLLGQPR</sequence>
<comment type="function">
    <text evidence="1">Mitochondrial intermembrane chaperone that participates in the import and insertion of multi-pass transmembrane proteins into the mitochondrial inner membrane. May also be required for the transfer of beta-barrel precursors from the TOM complex to the sorting and assembly machinery (SAM complex) of the outer membrane. Acts as a chaperone-like protein that protects the hydrophobic precursors from aggregation and guide them through the mitochondrial intermembrane space (By similarity).</text>
</comment>
<comment type="subunit">
    <text evidence="1">Heterohexamer; composed of 3 copies of TIMM9 and 3 copies of TIMM10/TIM10A, named soluble 70 kDa complex. The complex forms a 6-bladed alpha-propeller structure and associates with the TIMM22 component of the TIM22 complex. Interacts with multi-pass transmembrane proteins in transit. Also forms a complex composed of TIMM9, TIMM10/TIM10A and FXC1/TIM10B (By similarity).</text>
</comment>
<comment type="subcellular location">
    <subcellularLocation>
        <location evidence="1">Mitochondrion inner membrane</location>
        <topology evidence="1">Peripheral membrane protein</topology>
        <orientation evidence="1">Intermembrane side</orientation>
    </subcellularLocation>
</comment>
<comment type="domain">
    <text evidence="1">The twin CX3C motif contains 4 conserved Cys residues that form 2 disulfide bonds in the mitochondrial intermembrane space. However, during the transit of TIMM9 from cytoplasm into mitochondrion, the Cys residues probably coordinate zinc, thereby preventing folding and allowing its transfer across mitochondrial outer membrane (By similarity).</text>
</comment>
<comment type="similarity">
    <text evidence="3">Belongs to the small Tim family.</text>
</comment>
<evidence type="ECO:0000250" key="1"/>
<evidence type="ECO:0000250" key="2">
    <source>
        <dbReference type="UniProtKB" id="Q9Y5J7"/>
    </source>
</evidence>
<evidence type="ECO:0000305" key="3"/>
<organism>
    <name type="scientific">Rattus norvegicus</name>
    <name type="common">Rat</name>
    <dbReference type="NCBI Taxonomy" id="10116"/>
    <lineage>
        <taxon>Eukaryota</taxon>
        <taxon>Metazoa</taxon>
        <taxon>Chordata</taxon>
        <taxon>Craniata</taxon>
        <taxon>Vertebrata</taxon>
        <taxon>Euteleostomi</taxon>
        <taxon>Mammalia</taxon>
        <taxon>Eutheria</taxon>
        <taxon>Euarchontoglires</taxon>
        <taxon>Glires</taxon>
        <taxon>Rodentia</taxon>
        <taxon>Myomorpha</taxon>
        <taxon>Muroidea</taxon>
        <taxon>Muridae</taxon>
        <taxon>Murinae</taxon>
        <taxon>Rattus</taxon>
    </lineage>
</organism>